<comment type="similarity">
    <text evidence="1">Belongs to the bacterial ribosomal protein bS16 family.</text>
</comment>
<gene>
    <name evidence="1" type="primary">rpsP</name>
    <name evidence="1" type="synonym">rps16</name>
    <name type="ordered locus">SynWH7803_1730</name>
</gene>
<dbReference type="EMBL" id="CT971583">
    <property type="protein sequence ID" value="CAK24156.1"/>
    <property type="molecule type" value="Genomic_DNA"/>
</dbReference>
<dbReference type="SMR" id="A5GMJ1"/>
<dbReference type="STRING" id="32051.SynWH7803_1730"/>
<dbReference type="KEGG" id="syx:SynWH7803_1730"/>
<dbReference type="eggNOG" id="COG0228">
    <property type="taxonomic scope" value="Bacteria"/>
</dbReference>
<dbReference type="HOGENOM" id="CLU_100590_3_2_3"/>
<dbReference type="OrthoDB" id="9807878at2"/>
<dbReference type="Proteomes" id="UP000001566">
    <property type="component" value="Chromosome"/>
</dbReference>
<dbReference type="GO" id="GO:0005737">
    <property type="term" value="C:cytoplasm"/>
    <property type="evidence" value="ECO:0007669"/>
    <property type="project" value="UniProtKB-ARBA"/>
</dbReference>
<dbReference type="GO" id="GO:0015935">
    <property type="term" value="C:small ribosomal subunit"/>
    <property type="evidence" value="ECO:0007669"/>
    <property type="project" value="TreeGrafter"/>
</dbReference>
<dbReference type="GO" id="GO:0003735">
    <property type="term" value="F:structural constituent of ribosome"/>
    <property type="evidence" value="ECO:0007669"/>
    <property type="project" value="InterPro"/>
</dbReference>
<dbReference type="GO" id="GO:0006412">
    <property type="term" value="P:translation"/>
    <property type="evidence" value="ECO:0007669"/>
    <property type="project" value="UniProtKB-UniRule"/>
</dbReference>
<dbReference type="Gene3D" id="3.30.1320.10">
    <property type="match status" value="1"/>
</dbReference>
<dbReference type="HAMAP" id="MF_00385">
    <property type="entry name" value="Ribosomal_bS16"/>
    <property type="match status" value="1"/>
</dbReference>
<dbReference type="InterPro" id="IPR000307">
    <property type="entry name" value="Ribosomal_bS16"/>
</dbReference>
<dbReference type="InterPro" id="IPR020592">
    <property type="entry name" value="Ribosomal_bS16_CS"/>
</dbReference>
<dbReference type="InterPro" id="IPR023803">
    <property type="entry name" value="Ribosomal_bS16_dom_sf"/>
</dbReference>
<dbReference type="NCBIfam" id="TIGR00002">
    <property type="entry name" value="S16"/>
    <property type="match status" value="1"/>
</dbReference>
<dbReference type="PANTHER" id="PTHR12919">
    <property type="entry name" value="30S RIBOSOMAL PROTEIN S16"/>
    <property type="match status" value="1"/>
</dbReference>
<dbReference type="PANTHER" id="PTHR12919:SF20">
    <property type="entry name" value="SMALL RIBOSOMAL SUBUNIT PROTEIN BS16M"/>
    <property type="match status" value="1"/>
</dbReference>
<dbReference type="Pfam" id="PF00886">
    <property type="entry name" value="Ribosomal_S16"/>
    <property type="match status" value="1"/>
</dbReference>
<dbReference type="SUPFAM" id="SSF54565">
    <property type="entry name" value="Ribosomal protein S16"/>
    <property type="match status" value="1"/>
</dbReference>
<dbReference type="PROSITE" id="PS00732">
    <property type="entry name" value="RIBOSOMAL_S16"/>
    <property type="match status" value="1"/>
</dbReference>
<name>RS16_SYNPW</name>
<organism>
    <name type="scientific">Synechococcus sp. (strain WH7803)</name>
    <dbReference type="NCBI Taxonomy" id="32051"/>
    <lineage>
        <taxon>Bacteria</taxon>
        <taxon>Bacillati</taxon>
        <taxon>Cyanobacteriota</taxon>
        <taxon>Cyanophyceae</taxon>
        <taxon>Synechococcales</taxon>
        <taxon>Synechococcaceae</taxon>
        <taxon>Synechococcus</taxon>
    </lineage>
</organism>
<accession>A5GMJ1</accession>
<keyword id="KW-1185">Reference proteome</keyword>
<keyword id="KW-0687">Ribonucleoprotein</keyword>
<keyword id="KW-0689">Ribosomal protein</keyword>
<protein>
    <recommendedName>
        <fullName evidence="1">Small ribosomal subunit protein bS16</fullName>
    </recommendedName>
    <alternativeName>
        <fullName evidence="3">30S ribosomal protein S16</fullName>
    </alternativeName>
</protein>
<sequence>MIKLRLKRFGKKREASFRLVACNSTSRRDGRPLQELGFYNPRTKETRLDAEALRQRLSQGAQPTDAVRTLLEKGGLIEKTVRPAEIVGKLKQAAKREADAKQAAKEAAEAKAAAEAEAKAAAEAESADAGAEEAPAEA</sequence>
<reference key="1">
    <citation type="submission" date="2006-05" db="EMBL/GenBank/DDBJ databases">
        <authorList>
            <consortium name="Genoscope"/>
        </authorList>
    </citation>
    <scope>NUCLEOTIDE SEQUENCE [LARGE SCALE GENOMIC DNA]</scope>
    <source>
        <strain>WH7803</strain>
    </source>
</reference>
<proteinExistence type="inferred from homology"/>
<feature type="chain" id="PRO_1000049367" description="Small ribosomal subunit protein bS16">
    <location>
        <begin position="1"/>
        <end position="138"/>
    </location>
</feature>
<feature type="region of interest" description="Disordered" evidence="2">
    <location>
        <begin position="92"/>
        <end position="138"/>
    </location>
</feature>
<feature type="compositionally biased region" description="Basic and acidic residues" evidence="2">
    <location>
        <begin position="94"/>
        <end position="122"/>
    </location>
</feature>
<evidence type="ECO:0000255" key="1">
    <source>
        <dbReference type="HAMAP-Rule" id="MF_00385"/>
    </source>
</evidence>
<evidence type="ECO:0000256" key="2">
    <source>
        <dbReference type="SAM" id="MobiDB-lite"/>
    </source>
</evidence>
<evidence type="ECO:0000305" key="3"/>